<accession>Q38876</accession>
<protein>
    <recommendedName>
        <fullName>Agamous-like MADS-box protein AGL8</fullName>
    </recommendedName>
    <alternativeName>
        <fullName>Floral homeotic protein AGL8</fullName>
    </alternativeName>
    <alternativeName>
        <fullName>Transcription factor FRUITFULL</fullName>
    </alternativeName>
</protein>
<keyword id="KW-0010">Activator</keyword>
<keyword id="KW-0025">Alternative splicing</keyword>
<keyword id="KW-0175">Coiled coil</keyword>
<keyword id="KW-0217">Developmental protein</keyword>
<keyword id="KW-0221">Differentiation</keyword>
<keyword id="KW-0238">DNA-binding</keyword>
<keyword id="KW-0287">Flowering</keyword>
<keyword id="KW-0539">Nucleus</keyword>
<keyword id="KW-1185">Reference proteome</keyword>
<keyword id="KW-0804">Transcription</keyword>
<keyword id="KW-0805">Transcription regulation</keyword>
<comment type="function">
    <text evidence="5 6 7 8">Probable transcription factor that promotes early floral meristem identity in synergy with APETALA1 and CAULIFLOWER. Is required subsequently for the transition of an inflorescence meristem into a floral meristem (PubMed:28586421). Seems to be partially redundant to the function of APETALA1 and CAULIFLOWER in the up-regulation of LEAFY. Is also required for normal pattern of cell division, expansion and differentiation during morphogenesis of the silique (PubMed:28586421). Probably not required for fruit elongation but instead is required to prevent ectopic activity of IND. Represses SAUR10 expression in stems and inflorescence branches (PubMed:28586421).</text>
</comment>
<comment type="subunit">
    <text evidence="1">Homodimer capable of binding to CArG-box sequences.</text>
</comment>
<comment type="interaction">
    <interactant intactId="EBI-621912">
        <id>Q38876</id>
    </interactant>
    <interactant intactId="EBI-592083">
        <id>O82794</id>
        <label>AGL24</label>
    </interactant>
    <organismsDiffer>false</organismsDiffer>
    <experiments>3</experiments>
</comment>
<comment type="interaction">
    <interactant intactId="EBI-621912">
        <id>Q38876</id>
    </interactant>
    <interactant intactId="EBI-592020">
        <id>O22456</id>
        <label>SEP3</label>
    </interactant>
    <organismsDiffer>false</organismsDiffer>
    <experiments>3</experiments>
</comment>
<comment type="interaction">
    <interactant intactId="EBI-621912">
        <id>Q38876</id>
    </interactant>
    <interactant intactId="EBI-592041">
        <id>O64645</id>
        <label>SOC1</label>
    </interactant>
    <organismsDiffer>false</organismsDiffer>
    <experiments>4</experiments>
</comment>
<comment type="subcellular location">
    <subcellularLocation>
        <location evidence="3">Nucleus</location>
    </subcellularLocation>
</comment>
<comment type="alternative products">
    <event type="alternative splicing"/>
    <isoform>
        <id>Q38876-1</id>
        <name>1</name>
        <sequence type="displayed"/>
    </isoform>
    <text>A number of isoforms are produced. According to EST sequences.</text>
</comment>
<comment type="tissue specificity">
    <text evidence="8">Vascular tissue of cauline leaves, floral shoot apex and valves of carpels and fruits.</text>
</comment>
<comment type="induction">
    <text>Dramatically up-regulated upon the transition from vegetative to reproductive development.</text>
</comment>
<comment type="disruption phenotype">
    <text evidence="7">Altered cauline leaf shape, abnormal stem development and architecture, including enhanced branching, decreased inflorescence branch angles, and shorter stem and internode lengths. Reduced stems elongation after bolting.</text>
</comment>
<feature type="chain" id="PRO_0000199461" description="Agamous-like MADS-box protein AGL8">
    <location>
        <begin position="1"/>
        <end position="242"/>
    </location>
</feature>
<feature type="domain" description="MADS-box" evidence="3">
    <location>
        <begin position="3"/>
        <end position="57"/>
    </location>
</feature>
<feature type="domain" description="K-box" evidence="4">
    <location>
        <begin position="88"/>
        <end position="178"/>
    </location>
</feature>
<feature type="coiled-coil region" evidence="2">
    <location>
        <begin position="89"/>
        <end position="178"/>
    </location>
</feature>
<gene>
    <name type="primary">AGL8</name>
    <name type="synonym">FUL</name>
    <name type="ordered locus">At5g60910</name>
    <name type="ORF">MSL3.3</name>
</gene>
<name>AGL8_ARATH</name>
<evidence type="ECO:0000250" key="1"/>
<evidence type="ECO:0000255" key="2"/>
<evidence type="ECO:0000255" key="3">
    <source>
        <dbReference type="PROSITE-ProRule" id="PRU00251"/>
    </source>
</evidence>
<evidence type="ECO:0000255" key="4">
    <source>
        <dbReference type="PROSITE-ProRule" id="PRU00629"/>
    </source>
</evidence>
<evidence type="ECO:0000269" key="5">
    <source>
    </source>
</evidence>
<evidence type="ECO:0000269" key="6">
    <source>
    </source>
</evidence>
<evidence type="ECO:0000269" key="7">
    <source>
    </source>
</evidence>
<evidence type="ECO:0000269" key="8">
    <source>
    </source>
</evidence>
<sequence>MGRGRVQLKRIENKINRQVTFSKRRSGLLKKAHEISVLCDAEVALIVFSSKGKLFEYSTDSCMERILERYDRYLYSDKQLVGRDVSQSENWVLEHAKLKARVEVLEKNKRNFMGEDLDSLSLKELQSLEHQLDAAIKSIRSRKNQAMFESISALQKKDKALQDHNNSLLKKIKEREKKTGQQEGQLVQCSNSSSVLLPQYCVTSSRDGFVERVGGENGGASSLTEPNSLLPAWMLRPTTTNE</sequence>
<proteinExistence type="evidence at protein level"/>
<organism>
    <name type="scientific">Arabidopsis thaliana</name>
    <name type="common">Mouse-ear cress</name>
    <dbReference type="NCBI Taxonomy" id="3702"/>
    <lineage>
        <taxon>Eukaryota</taxon>
        <taxon>Viridiplantae</taxon>
        <taxon>Streptophyta</taxon>
        <taxon>Embryophyta</taxon>
        <taxon>Tracheophyta</taxon>
        <taxon>Spermatophyta</taxon>
        <taxon>Magnoliopsida</taxon>
        <taxon>eudicotyledons</taxon>
        <taxon>Gunneridae</taxon>
        <taxon>Pentapetalae</taxon>
        <taxon>rosids</taxon>
        <taxon>malvids</taxon>
        <taxon>Brassicales</taxon>
        <taxon>Brassicaceae</taxon>
        <taxon>Camelineae</taxon>
        <taxon>Arabidopsis</taxon>
    </lineage>
</organism>
<reference key="1">
    <citation type="journal article" date="1995" name="Plant Cell">
        <title>The Arabidopsis AGL8 MADS box gene is expressed in inflorescence meristems and is negatively regulated by APETALA1.</title>
        <authorList>
            <person name="Mandel M.A."/>
            <person name="Yanofsky M.F."/>
        </authorList>
    </citation>
    <scope>NUCLEOTIDE SEQUENCE [MRNA]</scope>
    <source>
        <strain>cv. Columbia</strain>
    </source>
</reference>
<reference key="2">
    <citation type="journal article" date="1997" name="DNA Res.">
        <title>Structural analysis of Arabidopsis thaliana chromosome 5. III. Sequence features of the regions of 1,191,918 bp covered by seventeen physically assigned P1 clones.</title>
        <authorList>
            <person name="Nakamura Y."/>
            <person name="Sato S."/>
            <person name="Kaneko T."/>
            <person name="Kotani H."/>
            <person name="Asamizu E."/>
            <person name="Miyajima N."/>
            <person name="Tabata S."/>
        </authorList>
    </citation>
    <scope>NUCLEOTIDE SEQUENCE [LARGE SCALE GENOMIC DNA]</scope>
    <source>
        <strain>cv. Columbia</strain>
    </source>
</reference>
<reference key="3">
    <citation type="journal article" date="2017" name="Plant J.">
        <title>Araport11: a complete reannotation of the Arabidopsis thaliana reference genome.</title>
        <authorList>
            <person name="Cheng C.Y."/>
            <person name="Krishnakumar V."/>
            <person name="Chan A.P."/>
            <person name="Thibaud-Nissen F."/>
            <person name="Schobel S."/>
            <person name="Town C.D."/>
        </authorList>
    </citation>
    <scope>GENOME REANNOTATION</scope>
    <source>
        <strain>cv. Columbia</strain>
    </source>
</reference>
<reference key="4">
    <citation type="journal article" date="2003" name="Science">
        <title>Empirical analysis of transcriptional activity in the Arabidopsis genome.</title>
        <authorList>
            <person name="Yamada K."/>
            <person name="Lim J."/>
            <person name="Dale J.M."/>
            <person name="Chen H."/>
            <person name="Shinn P."/>
            <person name="Palm C.J."/>
            <person name="Southwick A.M."/>
            <person name="Wu H.C."/>
            <person name="Kim C.J."/>
            <person name="Nguyen M."/>
            <person name="Pham P.K."/>
            <person name="Cheuk R.F."/>
            <person name="Karlin-Newmann G."/>
            <person name="Liu S.X."/>
            <person name="Lam B."/>
            <person name="Sakano H."/>
            <person name="Wu T."/>
            <person name="Yu G."/>
            <person name="Miranda M."/>
            <person name="Quach H.L."/>
            <person name="Tripp M."/>
            <person name="Chang C.H."/>
            <person name="Lee J.M."/>
            <person name="Toriumi M.J."/>
            <person name="Chan M.M."/>
            <person name="Tang C.C."/>
            <person name="Onodera C.S."/>
            <person name="Deng J.M."/>
            <person name="Akiyama K."/>
            <person name="Ansari Y."/>
            <person name="Arakawa T."/>
            <person name="Banh J."/>
            <person name="Banno F."/>
            <person name="Bowser L."/>
            <person name="Brooks S.Y."/>
            <person name="Carninci P."/>
            <person name="Chao Q."/>
            <person name="Choy N."/>
            <person name="Enju A."/>
            <person name="Goldsmith A.D."/>
            <person name="Gurjal M."/>
            <person name="Hansen N.F."/>
            <person name="Hayashizaki Y."/>
            <person name="Johnson-Hopson C."/>
            <person name="Hsuan V.W."/>
            <person name="Iida K."/>
            <person name="Karnes M."/>
            <person name="Khan S."/>
            <person name="Koesema E."/>
            <person name="Ishida J."/>
            <person name="Jiang P.X."/>
            <person name="Jones T."/>
            <person name="Kawai J."/>
            <person name="Kamiya A."/>
            <person name="Meyers C."/>
            <person name="Nakajima M."/>
            <person name="Narusaka M."/>
            <person name="Seki M."/>
            <person name="Sakurai T."/>
            <person name="Satou M."/>
            <person name="Tamse R."/>
            <person name="Vaysberg M."/>
            <person name="Wallender E.K."/>
            <person name="Wong C."/>
            <person name="Yamamura Y."/>
            <person name="Yuan S."/>
            <person name="Shinozaki K."/>
            <person name="Davis R.W."/>
            <person name="Theologis A."/>
            <person name="Ecker J.R."/>
        </authorList>
    </citation>
    <scope>NUCLEOTIDE SEQUENCE [LARGE SCALE MRNA]</scope>
    <source>
        <strain>cv. Columbia</strain>
    </source>
</reference>
<reference key="5">
    <citation type="journal article" date="1998" name="Development">
        <title>The FRUITFULL MADS-box gene mediates cell differentiation during Arabidopsis fruit development.</title>
        <authorList>
            <person name="Gu Q."/>
            <person name="Ferrandiz C."/>
            <person name="Yanofsky M.F."/>
            <person name="Martienssen R."/>
        </authorList>
    </citation>
    <scope>FUNCTION</scope>
    <scope>TISSUE SPECIFICITY</scope>
    <source>
        <strain>cv. Landsberg erecta</strain>
    </source>
</reference>
<reference key="6">
    <citation type="journal article" date="2000" name="Development">
        <title>Redundant regulation of meristem identity and plant architecture by FRUITFULL, APETALA1 and CAULIFLOWER.</title>
        <authorList>
            <person name="Ferrandiz C."/>
            <person name="Gu Q."/>
            <person name="Martienssen R."/>
            <person name="Yanofsky M.F."/>
        </authorList>
    </citation>
    <scope>FUNCTION</scope>
</reference>
<reference key="7">
    <citation type="journal article" date="2004" name="Cell">
        <title>Control of fruit patterning in Arabidopsis by INDEHISCENT.</title>
        <authorList>
            <person name="Liljegren S.J."/>
            <person name="Roeder A.H.K."/>
            <person name="Kempin S.A."/>
            <person name="Gremski K."/>
            <person name="Ostergaard L."/>
            <person name="Guimil S."/>
            <person name="Reyes D.K."/>
            <person name="Yanofsky M.F."/>
        </authorList>
    </citation>
    <scope>FUNCTION</scope>
</reference>
<reference key="8">
    <citation type="journal article" date="2017" name="J. Exp. Bot.">
        <title>FRUITFULL controls SAUR10 expression and regulates Arabidopsis growth and architecture.</title>
        <authorList>
            <person name="Bemer M."/>
            <person name="van Mourik H."/>
            <person name="Muino J.M."/>
            <person name="Ferrandiz C."/>
            <person name="Kaufmann K."/>
            <person name="Angenent G.C."/>
        </authorList>
    </citation>
    <scope>FUNCTION</scope>
    <scope>DISRUPTION PHENOTYPE</scope>
    <source>
        <strain>cv. Columbia</strain>
    </source>
</reference>
<dbReference type="EMBL" id="U33473">
    <property type="protein sequence ID" value="AAA97403.1"/>
    <property type="molecule type" value="mRNA"/>
</dbReference>
<dbReference type="EMBL" id="AB008269">
    <property type="protein sequence ID" value="BAB10640.1"/>
    <property type="molecule type" value="Genomic_DNA"/>
</dbReference>
<dbReference type="EMBL" id="CP002688">
    <property type="protein sequence ID" value="AED97395.1"/>
    <property type="molecule type" value="Genomic_DNA"/>
</dbReference>
<dbReference type="EMBL" id="AF386929">
    <property type="protein sequence ID" value="AAK62374.1"/>
    <property type="molecule type" value="mRNA"/>
</dbReference>
<dbReference type="EMBL" id="AY072463">
    <property type="protein sequence ID" value="AAL66878.1"/>
    <property type="molecule type" value="mRNA"/>
</dbReference>
<dbReference type="PIR" id="S71208">
    <property type="entry name" value="S71208"/>
</dbReference>
<dbReference type="RefSeq" id="NP_568929.1">
    <molecule id="Q38876-1"/>
    <property type="nucleotide sequence ID" value="NM_125484.4"/>
</dbReference>
<dbReference type="SMR" id="Q38876"/>
<dbReference type="BioGRID" id="21456">
    <property type="interactions" value="17"/>
</dbReference>
<dbReference type="DIP" id="DIP-33794N"/>
<dbReference type="FunCoup" id="Q38876">
    <property type="interactions" value="30"/>
</dbReference>
<dbReference type="IntAct" id="Q38876">
    <property type="interactions" value="20"/>
</dbReference>
<dbReference type="STRING" id="3702.Q38876"/>
<dbReference type="PaxDb" id="3702-AT5G60910.1"/>
<dbReference type="ProteomicsDB" id="244732">
    <molecule id="Q38876-1"/>
</dbReference>
<dbReference type="EnsemblPlants" id="AT5G60910.1">
    <molecule id="Q38876-1"/>
    <property type="protein sequence ID" value="AT5G60910.1"/>
    <property type="gene ID" value="AT5G60910"/>
</dbReference>
<dbReference type="GeneID" id="836212"/>
<dbReference type="Gramene" id="AT5G60910.1">
    <molecule id="Q38876-1"/>
    <property type="protein sequence ID" value="AT5G60910.1"/>
    <property type="gene ID" value="AT5G60910"/>
</dbReference>
<dbReference type="KEGG" id="ath:AT5G60910"/>
<dbReference type="Araport" id="AT5G60910"/>
<dbReference type="TAIR" id="AT5G60910">
    <property type="gene designation" value="AGL8"/>
</dbReference>
<dbReference type="eggNOG" id="KOG0014">
    <property type="taxonomic scope" value="Eukaryota"/>
</dbReference>
<dbReference type="HOGENOM" id="CLU_053053_0_2_1"/>
<dbReference type="InParanoid" id="Q38876"/>
<dbReference type="OMA" id="HESTGSW"/>
<dbReference type="OrthoDB" id="1933443at2759"/>
<dbReference type="PhylomeDB" id="Q38876"/>
<dbReference type="PRO" id="PR:Q38876"/>
<dbReference type="Proteomes" id="UP000006548">
    <property type="component" value="Chromosome 5"/>
</dbReference>
<dbReference type="ExpressionAtlas" id="Q38876">
    <property type="expression patterns" value="baseline and differential"/>
</dbReference>
<dbReference type="GO" id="GO:0005634">
    <property type="term" value="C:nucleus"/>
    <property type="evidence" value="ECO:0007669"/>
    <property type="project" value="UniProtKB-SubCell"/>
</dbReference>
<dbReference type="GO" id="GO:0003700">
    <property type="term" value="F:DNA-binding transcription factor activity"/>
    <property type="evidence" value="ECO:0000250"/>
    <property type="project" value="TAIR"/>
</dbReference>
<dbReference type="GO" id="GO:0046983">
    <property type="term" value="F:protein dimerization activity"/>
    <property type="evidence" value="ECO:0007669"/>
    <property type="project" value="InterPro"/>
</dbReference>
<dbReference type="GO" id="GO:0000977">
    <property type="term" value="F:RNA polymerase II transcription regulatory region sequence-specific DNA binding"/>
    <property type="evidence" value="ECO:0007669"/>
    <property type="project" value="InterPro"/>
</dbReference>
<dbReference type="GO" id="GO:0043565">
    <property type="term" value="F:sequence-specific DNA binding"/>
    <property type="evidence" value="ECO:0000314"/>
    <property type="project" value="UniProtKB"/>
</dbReference>
<dbReference type="GO" id="GO:0000976">
    <property type="term" value="F:transcription cis-regulatory region binding"/>
    <property type="evidence" value="ECO:0000353"/>
    <property type="project" value="TAIR"/>
</dbReference>
<dbReference type="GO" id="GO:0030154">
    <property type="term" value="P:cell differentiation"/>
    <property type="evidence" value="ECO:0007669"/>
    <property type="project" value="UniProtKB-KW"/>
</dbReference>
<dbReference type="GO" id="GO:0060560">
    <property type="term" value="P:developmental growth involved in morphogenesis"/>
    <property type="evidence" value="ECO:0000314"/>
    <property type="project" value="UniProtKB"/>
</dbReference>
<dbReference type="GO" id="GO:0009908">
    <property type="term" value="P:flower development"/>
    <property type="evidence" value="ECO:0007669"/>
    <property type="project" value="UniProtKB-KW"/>
</dbReference>
<dbReference type="GO" id="GO:0010154">
    <property type="term" value="P:fruit development"/>
    <property type="evidence" value="ECO:0000315"/>
    <property type="project" value="TAIR"/>
</dbReference>
<dbReference type="GO" id="GO:0010077">
    <property type="term" value="P:maintenance of inflorescence meristem identity"/>
    <property type="evidence" value="ECO:0000316"/>
    <property type="project" value="TAIR"/>
</dbReference>
<dbReference type="GO" id="GO:0009911">
    <property type="term" value="P:positive regulation of flower development"/>
    <property type="evidence" value="ECO:0000315"/>
    <property type="project" value="UniProtKB"/>
</dbReference>
<dbReference type="GO" id="GO:0045944">
    <property type="term" value="P:positive regulation of transcription by RNA polymerase II"/>
    <property type="evidence" value="ECO:0007669"/>
    <property type="project" value="InterPro"/>
</dbReference>
<dbReference type="CDD" id="cd00265">
    <property type="entry name" value="MADS_MEF2_like"/>
    <property type="match status" value="1"/>
</dbReference>
<dbReference type="FunFam" id="3.40.1810.10:FF:000003">
    <property type="entry name" value="MADS-box transcription factor MADS-MC"/>
    <property type="match status" value="1"/>
</dbReference>
<dbReference type="Gene3D" id="3.40.1810.10">
    <property type="entry name" value="Transcription factor, MADS-box"/>
    <property type="match status" value="1"/>
</dbReference>
<dbReference type="InterPro" id="IPR050142">
    <property type="entry name" value="MADS-box/MEF2_TF"/>
</dbReference>
<dbReference type="InterPro" id="IPR033896">
    <property type="entry name" value="MEF2-like_N"/>
</dbReference>
<dbReference type="InterPro" id="IPR002487">
    <property type="entry name" value="TF_Kbox"/>
</dbReference>
<dbReference type="InterPro" id="IPR002100">
    <property type="entry name" value="TF_MADSbox"/>
</dbReference>
<dbReference type="InterPro" id="IPR036879">
    <property type="entry name" value="TF_MADSbox_sf"/>
</dbReference>
<dbReference type="PANTHER" id="PTHR48019">
    <property type="entry name" value="SERUM RESPONSE FACTOR HOMOLOG"/>
    <property type="match status" value="1"/>
</dbReference>
<dbReference type="Pfam" id="PF01486">
    <property type="entry name" value="K-box"/>
    <property type="match status" value="1"/>
</dbReference>
<dbReference type="Pfam" id="PF00319">
    <property type="entry name" value="SRF-TF"/>
    <property type="match status" value="1"/>
</dbReference>
<dbReference type="PRINTS" id="PR00404">
    <property type="entry name" value="MADSDOMAIN"/>
</dbReference>
<dbReference type="SMART" id="SM00432">
    <property type="entry name" value="MADS"/>
    <property type="match status" value="1"/>
</dbReference>
<dbReference type="SUPFAM" id="SSF55455">
    <property type="entry name" value="SRF-like"/>
    <property type="match status" value="1"/>
</dbReference>
<dbReference type="PROSITE" id="PS51297">
    <property type="entry name" value="K_BOX"/>
    <property type="match status" value="1"/>
</dbReference>
<dbReference type="PROSITE" id="PS00350">
    <property type="entry name" value="MADS_BOX_1"/>
    <property type="match status" value="1"/>
</dbReference>
<dbReference type="PROSITE" id="PS50066">
    <property type="entry name" value="MADS_BOX_2"/>
    <property type="match status" value="1"/>
</dbReference>